<organism>
    <name type="scientific">Yersinia pestis (strain Pestoides F)</name>
    <dbReference type="NCBI Taxonomy" id="386656"/>
    <lineage>
        <taxon>Bacteria</taxon>
        <taxon>Pseudomonadati</taxon>
        <taxon>Pseudomonadota</taxon>
        <taxon>Gammaproteobacteria</taxon>
        <taxon>Enterobacterales</taxon>
        <taxon>Yersiniaceae</taxon>
        <taxon>Yersinia</taxon>
    </lineage>
</organism>
<comment type="function">
    <text evidence="1">Catalyzes the NADPH-dependent reduction of L-glutamate 5-phosphate into L-glutamate 5-semialdehyde and phosphate. The product spontaneously undergoes cyclization to form 1-pyrroline-5-carboxylate.</text>
</comment>
<comment type="catalytic activity">
    <reaction evidence="1">
        <text>L-glutamate 5-semialdehyde + phosphate + NADP(+) = L-glutamyl 5-phosphate + NADPH + H(+)</text>
        <dbReference type="Rhea" id="RHEA:19541"/>
        <dbReference type="ChEBI" id="CHEBI:15378"/>
        <dbReference type="ChEBI" id="CHEBI:43474"/>
        <dbReference type="ChEBI" id="CHEBI:57783"/>
        <dbReference type="ChEBI" id="CHEBI:58066"/>
        <dbReference type="ChEBI" id="CHEBI:58274"/>
        <dbReference type="ChEBI" id="CHEBI:58349"/>
        <dbReference type="EC" id="1.2.1.41"/>
    </reaction>
</comment>
<comment type="pathway">
    <text evidence="1">Amino-acid biosynthesis; L-proline biosynthesis; L-glutamate 5-semialdehyde from L-glutamate: step 2/2.</text>
</comment>
<comment type="subcellular location">
    <subcellularLocation>
        <location evidence="1">Cytoplasm</location>
    </subcellularLocation>
</comment>
<comment type="similarity">
    <text evidence="1">Belongs to the gamma-glutamyl phosphate reductase family.</text>
</comment>
<evidence type="ECO:0000255" key="1">
    <source>
        <dbReference type="HAMAP-Rule" id="MF_00412"/>
    </source>
</evidence>
<proteinExistence type="inferred from homology"/>
<protein>
    <recommendedName>
        <fullName evidence="1">Gamma-glutamyl phosphate reductase</fullName>
        <shortName evidence="1">GPR</shortName>
        <ecNumber evidence="1">1.2.1.41</ecNumber>
    </recommendedName>
    <alternativeName>
        <fullName evidence="1">Glutamate-5-semialdehyde dehydrogenase</fullName>
    </alternativeName>
    <alternativeName>
        <fullName evidence="1">Glutamyl-gamma-semialdehyde dehydrogenase</fullName>
        <shortName evidence="1">GSA dehydrogenase</shortName>
    </alternativeName>
</protein>
<keyword id="KW-0028">Amino-acid biosynthesis</keyword>
<keyword id="KW-0963">Cytoplasm</keyword>
<keyword id="KW-0521">NADP</keyword>
<keyword id="KW-0560">Oxidoreductase</keyword>
<keyword id="KW-0641">Proline biosynthesis</keyword>
<feature type="chain" id="PRO_1000050007" description="Gamma-glutamyl phosphate reductase">
    <location>
        <begin position="1"/>
        <end position="419"/>
    </location>
</feature>
<sequence>MNLLEHMGKAAKQASWQLAMLSTAKKNQALAVIANLLESESQTILQANERDMAAARESGMSEALLDRLLLTPARLAAIANDVRQVCRLNDPVGRVIDGSLLDSGLKLERRRVPLGVIGVIYEARPNVTIDVASLCLKTGNAVILRGGKETHYTNQATVNVIQRALEQCGLPAAAVQAIESPDRQLVNELLRLDRYVDMLIPRGGASLHKLCREQSTIPVITGGIGVCHTFVDENADFEKALLVIENAKIQRPSACNSLETLLVHQAVAKTFLPLLSARMHAFGVTLHASPLAMPYLADGKAKVVAVEAADYDDEWLSLDLNVDIVTDIDAAIDHIREHGTSHSDAILTRSLSHAEYFVRAVDSSAVYVNASTRFTDGGQFGLGAEVAVSTQKLHARGPMGLDALTTYKWIGYGDDLVRS</sequence>
<gene>
    <name evidence="1" type="primary">proA</name>
    <name type="ordered locus">YPDSF_2850</name>
</gene>
<reference key="1">
    <citation type="submission" date="2007-02" db="EMBL/GenBank/DDBJ databases">
        <title>Complete sequence of chromosome of Yersinia pestis Pestoides F.</title>
        <authorList>
            <consortium name="US DOE Joint Genome Institute"/>
            <person name="Copeland A."/>
            <person name="Lucas S."/>
            <person name="Lapidus A."/>
            <person name="Barry K."/>
            <person name="Detter J.C."/>
            <person name="Glavina del Rio T."/>
            <person name="Hammon N."/>
            <person name="Israni S."/>
            <person name="Dalin E."/>
            <person name="Tice H."/>
            <person name="Pitluck S."/>
            <person name="Di Bartolo G."/>
            <person name="Chain P."/>
            <person name="Malfatti S."/>
            <person name="Shin M."/>
            <person name="Vergez L."/>
            <person name="Schmutz J."/>
            <person name="Larimer F."/>
            <person name="Land M."/>
            <person name="Hauser L."/>
            <person name="Worsham P."/>
            <person name="Chu M."/>
            <person name="Bearden S."/>
            <person name="Garcia E."/>
            <person name="Richardson P."/>
        </authorList>
    </citation>
    <scope>NUCLEOTIDE SEQUENCE [LARGE SCALE GENOMIC DNA]</scope>
    <source>
        <strain>Pestoides F</strain>
    </source>
</reference>
<name>PROA_YERPP</name>
<dbReference type="EC" id="1.2.1.41" evidence="1"/>
<dbReference type="EMBL" id="CP000668">
    <property type="protein sequence ID" value="ABP41212.1"/>
    <property type="molecule type" value="Genomic_DNA"/>
</dbReference>
<dbReference type="SMR" id="A4TPK0"/>
<dbReference type="KEGG" id="ypp:YPDSF_2850"/>
<dbReference type="PATRIC" id="fig|386656.14.peg.112"/>
<dbReference type="UniPathway" id="UPA00098">
    <property type="reaction ID" value="UER00360"/>
</dbReference>
<dbReference type="GO" id="GO:0005737">
    <property type="term" value="C:cytoplasm"/>
    <property type="evidence" value="ECO:0007669"/>
    <property type="project" value="UniProtKB-SubCell"/>
</dbReference>
<dbReference type="GO" id="GO:0004350">
    <property type="term" value="F:glutamate-5-semialdehyde dehydrogenase activity"/>
    <property type="evidence" value="ECO:0007669"/>
    <property type="project" value="UniProtKB-UniRule"/>
</dbReference>
<dbReference type="GO" id="GO:0050661">
    <property type="term" value="F:NADP binding"/>
    <property type="evidence" value="ECO:0007669"/>
    <property type="project" value="InterPro"/>
</dbReference>
<dbReference type="GO" id="GO:0055129">
    <property type="term" value="P:L-proline biosynthetic process"/>
    <property type="evidence" value="ECO:0007669"/>
    <property type="project" value="UniProtKB-UniRule"/>
</dbReference>
<dbReference type="CDD" id="cd07079">
    <property type="entry name" value="ALDH_F18-19_ProA-GPR"/>
    <property type="match status" value="1"/>
</dbReference>
<dbReference type="FunFam" id="3.40.309.10:FF:000006">
    <property type="entry name" value="Gamma-glutamyl phosphate reductase"/>
    <property type="match status" value="1"/>
</dbReference>
<dbReference type="Gene3D" id="3.40.605.10">
    <property type="entry name" value="Aldehyde Dehydrogenase, Chain A, domain 1"/>
    <property type="match status" value="1"/>
</dbReference>
<dbReference type="Gene3D" id="3.40.309.10">
    <property type="entry name" value="Aldehyde Dehydrogenase, Chain A, domain 2"/>
    <property type="match status" value="1"/>
</dbReference>
<dbReference type="HAMAP" id="MF_00412">
    <property type="entry name" value="ProA"/>
    <property type="match status" value="1"/>
</dbReference>
<dbReference type="InterPro" id="IPR016161">
    <property type="entry name" value="Ald_DH/histidinol_DH"/>
</dbReference>
<dbReference type="InterPro" id="IPR016163">
    <property type="entry name" value="Ald_DH_C"/>
</dbReference>
<dbReference type="InterPro" id="IPR016162">
    <property type="entry name" value="Ald_DH_N"/>
</dbReference>
<dbReference type="InterPro" id="IPR015590">
    <property type="entry name" value="Aldehyde_DH_dom"/>
</dbReference>
<dbReference type="InterPro" id="IPR020593">
    <property type="entry name" value="G-glutamylP_reductase_CS"/>
</dbReference>
<dbReference type="InterPro" id="IPR012134">
    <property type="entry name" value="Glu-5-SA_DH"/>
</dbReference>
<dbReference type="InterPro" id="IPR000965">
    <property type="entry name" value="GPR_dom"/>
</dbReference>
<dbReference type="NCBIfam" id="NF001221">
    <property type="entry name" value="PRK00197.1"/>
    <property type="match status" value="1"/>
</dbReference>
<dbReference type="NCBIfam" id="TIGR00407">
    <property type="entry name" value="proA"/>
    <property type="match status" value="1"/>
</dbReference>
<dbReference type="PANTHER" id="PTHR11063:SF8">
    <property type="entry name" value="DELTA-1-PYRROLINE-5-CARBOXYLATE SYNTHASE"/>
    <property type="match status" value="1"/>
</dbReference>
<dbReference type="PANTHER" id="PTHR11063">
    <property type="entry name" value="GLUTAMATE SEMIALDEHYDE DEHYDROGENASE"/>
    <property type="match status" value="1"/>
</dbReference>
<dbReference type="Pfam" id="PF00171">
    <property type="entry name" value="Aldedh"/>
    <property type="match status" value="1"/>
</dbReference>
<dbReference type="PIRSF" id="PIRSF000151">
    <property type="entry name" value="GPR"/>
    <property type="match status" value="1"/>
</dbReference>
<dbReference type="SUPFAM" id="SSF53720">
    <property type="entry name" value="ALDH-like"/>
    <property type="match status" value="1"/>
</dbReference>
<dbReference type="PROSITE" id="PS01223">
    <property type="entry name" value="PROA"/>
    <property type="match status" value="1"/>
</dbReference>
<accession>A4TPK0</accession>